<gene>
    <name type="primary">OXNAD1</name>
</gene>
<organism>
    <name type="scientific">Bos taurus</name>
    <name type="common">Bovine</name>
    <dbReference type="NCBI Taxonomy" id="9913"/>
    <lineage>
        <taxon>Eukaryota</taxon>
        <taxon>Metazoa</taxon>
        <taxon>Chordata</taxon>
        <taxon>Craniata</taxon>
        <taxon>Vertebrata</taxon>
        <taxon>Euteleostomi</taxon>
        <taxon>Mammalia</taxon>
        <taxon>Eutheria</taxon>
        <taxon>Laurasiatheria</taxon>
        <taxon>Artiodactyla</taxon>
        <taxon>Ruminantia</taxon>
        <taxon>Pecora</taxon>
        <taxon>Bovidae</taxon>
        <taxon>Bovinae</taxon>
        <taxon>Bos</taxon>
    </lineage>
</organism>
<protein>
    <recommendedName>
        <fullName>Oxidoreductase NAD-binding domain-containing protein 1</fullName>
        <ecNumber>1.-.-.-</ecNumber>
    </recommendedName>
</protein>
<dbReference type="EC" id="1.-.-.-"/>
<dbReference type="EMBL" id="BT021570">
    <property type="protein sequence ID" value="AAX46417.1"/>
    <property type="molecule type" value="mRNA"/>
</dbReference>
<dbReference type="RefSeq" id="NP_001030262.1">
    <property type="nucleotide sequence ID" value="NM_001035090.1"/>
</dbReference>
<dbReference type="RefSeq" id="XP_010800047.1">
    <property type="nucleotide sequence ID" value="XM_010801745.4"/>
</dbReference>
<dbReference type="SMR" id="Q58DM7"/>
<dbReference type="FunCoup" id="Q58DM7">
    <property type="interactions" value="193"/>
</dbReference>
<dbReference type="STRING" id="9913.ENSBTAP00000006434"/>
<dbReference type="PaxDb" id="9913-ENSBTAP00000006434"/>
<dbReference type="Ensembl" id="ENSBTAT00000006434.6">
    <property type="protein sequence ID" value="ENSBTAP00000006434.4"/>
    <property type="gene ID" value="ENSBTAG00000004891.6"/>
</dbReference>
<dbReference type="GeneID" id="510462"/>
<dbReference type="KEGG" id="bta:510462"/>
<dbReference type="CTD" id="92106"/>
<dbReference type="VEuPathDB" id="HostDB:ENSBTAG00000004891"/>
<dbReference type="VGNC" id="VGNC:32512">
    <property type="gene designation" value="OXNAD1"/>
</dbReference>
<dbReference type="eggNOG" id="KOG0534">
    <property type="taxonomic scope" value="Eukaryota"/>
</dbReference>
<dbReference type="GeneTree" id="ENSGT00390000004280"/>
<dbReference type="HOGENOM" id="CLU_003827_7_1_1"/>
<dbReference type="InParanoid" id="Q58DM7"/>
<dbReference type="OMA" id="WIDFFIP"/>
<dbReference type="OrthoDB" id="436496at2759"/>
<dbReference type="TreeFam" id="TF329774"/>
<dbReference type="Proteomes" id="UP000009136">
    <property type="component" value="Chromosome 1"/>
</dbReference>
<dbReference type="Bgee" id="ENSBTAG00000004891">
    <property type="expression patterns" value="Expressed in thyroid gland and 106 other cell types or tissues"/>
</dbReference>
<dbReference type="GO" id="GO:0016491">
    <property type="term" value="F:oxidoreductase activity"/>
    <property type="evidence" value="ECO:0007669"/>
    <property type="project" value="UniProtKB-KW"/>
</dbReference>
<dbReference type="CDD" id="cd00322">
    <property type="entry name" value="FNR_like"/>
    <property type="match status" value="1"/>
</dbReference>
<dbReference type="Gene3D" id="3.40.50.80">
    <property type="entry name" value="Nucleotide-binding domain of ferredoxin-NADP reductase (FNR) module"/>
    <property type="match status" value="1"/>
</dbReference>
<dbReference type="Gene3D" id="2.40.30.10">
    <property type="entry name" value="Translation factors"/>
    <property type="match status" value="1"/>
</dbReference>
<dbReference type="InterPro" id="IPR017927">
    <property type="entry name" value="FAD-bd_FR_type"/>
</dbReference>
<dbReference type="InterPro" id="IPR039261">
    <property type="entry name" value="FNR_nucleotide-bd"/>
</dbReference>
<dbReference type="InterPro" id="IPR052128">
    <property type="entry name" value="Oxidoreductase_NAD-binding"/>
</dbReference>
<dbReference type="InterPro" id="IPR001433">
    <property type="entry name" value="OxRdtase_FAD/NAD-bd"/>
</dbReference>
<dbReference type="InterPro" id="IPR017938">
    <property type="entry name" value="Riboflavin_synthase-like_b-brl"/>
</dbReference>
<dbReference type="PANTHER" id="PTHR46505">
    <property type="entry name" value="OXIDOREDUCTASE NAD-BINDING DOMAIN-CONTAINING PROTEIN 1"/>
    <property type="match status" value="1"/>
</dbReference>
<dbReference type="PANTHER" id="PTHR46505:SF1">
    <property type="entry name" value="OXIDOREDUCTASE NAD-BINDING DOMAIN-CONTAINING PROTEIN 1"/>
    <property type="match status" value="1"/>
</dbReference>
<dbReference type="Pfam" id="PF00175">
    <property type="entry name" value="NAD_binding_1"/>
    <property type="match status" value="1"/>
</dbReference>
<dbReference type="PRINTS" id="PR00410">
    <property type="entry name" value="PHEHYDRXLASE"/>
</dbReference>
<dbReference type="SUPFAM" id="SSF52343">
    <property type="entry name" value="Ferredoxin reductase-like, C-terminal NADP-linked domain"/>
    <property type="match status" value="1"/>
</dbReference>
<dbReference type="SUPFAM" id="SSF63380">
    <property type="entry name" value="Riboflavin synthase domain-like"/>
    <property type="match status" value="1"/>
</dbReference>
<dbReference type="PROSITE" id="PS51384">
    <property type="entry name" value="FAD_FR"/>
    <property type="match status" value="1"/>
</dbReference>
<accession>Q58DM7</accession>
<name>OXND1_BOVIN</name>
<reference key="1">
    <citation type="journal article" date="2005" name="BMC Genomics">
        <title>Characterization of 954 bovine full-CDS cDNA sequences.</title>
        <authorList>
            <person name="Harhay G.P."/>
            <person name="Sonstegard T.S."/>
            <person name="Keele J.W."/>
            <person name="Heaton M.P."/>
            <person name="Clawson M.L."/>
            <person name="Snelling W.M."/>
            <person name="Wiedmann R.T."/>
            <person name="Van Tassell C.P."/>
            <person name="Smith T.P.L."/>
        </authorList>
    </citation>
    <scope>NUCLEOTIDE SEQUENCE [LARGE SCALE MRNA]</scope>
</reference>
<keyword id="KW-0520">NAD</keyword>
<keyword id="KW-0560">Oxidoreductase</keyword>
<keyword id="KW-1185">Reference proteome</keyword>
<keyword id="KW-0732">Signal</keyword>
<sequence>MVVVIPRLLRGSLGAICTQAALLRSTPSAFRYLTRSSVMKSKRRPDHLERTADVVRQEVVSAAKVCGVASESPSVKRLCLLVADKDFSFKAGQWVDFFIPGVSVVGGFSICSSPRLLEQERMIELAVKHANHPPALWIHNQCTLDSEVAVRVGGEFFFDPKPTDASRNLVLIAGGVGINPLLSILRHAADLLRERASKGQGYEMGTVRLLYSAKDTSELLFKKNILDLVNEFPEKIACSLHVTKQTTQITADLRPYITEGRITQKEIRDHISKETLFYICGPPPMTDFFSKELESSRVPREHICFEKWW</sequence>
<proteinExistence type="evidence at transcript level"/>
<feature type="signal peptide" evidence="2">
    <location>
        <begin position="1"/>
        <end position="14"/>
    </location>
</feature>
<feature type="chain" id="PRO_0000299570" description="Oxidoreductase NAD-binding domain-containing protein 1">
    <location>
        <begin position="15"/>
        <end position="309"/>
    </location>
</feature>
<feature type="domain" description="FAD-binding FR-type" evidence="3">
    <location>
        <begin position="47"/>
        <end position="161"/>
    </location>
</feature>
<feature type="binding site" evidence="1">
    <location>
        <begin position="175"/>
        <end position="180"/>
    </location>
    <ligand>
        <name>NAD(+)</name>
        <dbReference type="ChEBI" id="CHEBI:57540"/>
    </ligand>
</feature>
<evidence type="ECO:0000250" key="1"/>
<evidence type="ECO:0000255" key="2"/>
<evidence type="ECO:0000255" key="3">
    <source>
        <dbReference type="PROSITE-ProRule" id="PRU00716"/>
    </source>
</evidence>